<gene>
    <name evidence="3" type="primary">RTEL1</name>
    <name evidence="5" type="ordered locus">Os01g0592900</name>
    <name evidence="3" type="ordered locus">LOC_Os01g40980</name>
    <name evidence="4" type="ORF">P0710A02.28-1</name>
</gene>
<feature type="chain" id="PRO_0000442766" description="Regulator of telomere elongation helicase 1 homolog">
    <location>
        <begin position="1"/>
        <end position="1014"/>
    </location>
</feature>
<feature type="domain" description="Helicase ATP-binding" evidence="1">
    <location>
        <begin position="7"/>
        <end position="308"/>
    </location>
</feature>
<feature type="region of interest" description="Disordered" evidence="2">
    <location>
        <begin position="70"/>
        <end position="106"/>
    </location>
</feature>
<feature type="region of interest" description="Disordered" evidence="2">
    <location>
        <begin position="906"/>
        <end position="930"/>
    </location>
</feature>
<feature type="short sequence motif" description="DEAH box" evidence="1">
    <location>
        <begin position="255"/>
        <end position="258"/>
    </location>
</feature>
<feature type="compositionally biased region" description="Gly residues" evidence="2">
    <location>
        <begin position="70"/>
        <end position="85"/>
    </location>
</feature>
<feature type="compositionally biased region" description="Low complexity" evidence="2">
    <location>
        <begin position="86"/>
        <end position="106"/>
    </location>
</feature>
<feature type="binding site" evidence="1">
    <location>
        <begin position="42"/>
        <end position="49"/>
    </location>
    <ligand>
        <name>ATP</name>
        <dbReference type="ChEBI" id="CHEBI:30616"/>
    </ligand>
</feature>
<feature type="binding site" evidence="3">
    <location>
        <position position="149"/>
    </location>
    <ligand>
        <name>[4Fe-4S] cluster</name>
        <dbReference type="ChEBI" id="CHEBI:49883"/>
    </ligand>
</feature>
<feature type="binding site" evidence="3">
    <location>
        <position position="170"/>
    </location>
    <ligand>
        <name>[4Fe-4S] cluster</name>
        <dbReference type="ChEBI" id="CHEBI:49883"/>
    </ligand>
</feature>
<feature type="binding site" evidence="3">
    <location>
        <position position="175"/>
    </location>
    <ligand>
        <name>[4Fe-4S] cluster</name>
        <dbReference type="ChEBI" id="CHEBI:49883"/>
    </ligand>
</feature>
<feature type="binding site" evidence="3">
    <location>
        <position position="211"/>
    </location>
    <ligand>
        <name>[4Fe-4S] cluster</name>
        <dbReference type="ChEBI" id="CHEBI:49883"/>
    </ligand>
</feature>
<feature type="sequence conflict" description="In Ref. 5; AK099544." evidence="3" ref="5">
    <original>K</original>
    <variation>E</variation>
    <location>
        <position position="728"/>
    </location>
</feature>
<name>RTEL1_ORYSJ</name>
<dbReference type="EC" id="5.6.2.-" evidence="3"/>
<dbReference type="EMBL" id="AP003048">
    <property type="protein sequence ID" value="BAD52706.1"/>
    <property type="status" value="ALT_SEQ"/>
    <property type="molecule type" value="Genomic_DNA"/>
</dbReference>
<dbReference type="EMBL" id="AP008207">
    <property type="protein sequence ID" value="BAF05370.2"/>
    <property type="status" value="ALT_SEQ"/>
    <property type="molecule type" value="Genomic_DNA"/>
</dbReference>
<dbReference type="EMBL" id="AP014957">
    <property type="protein sequence ID" value="BAS72959.1"/>
    <property type="molecule type" value="Genomic_DNA"/>
</dbReference>
<dbReference type="EMBL" id="CM000138">
    <property type="protein sequence ID" value="EEE54911.1"/>
    <property type="status" value="ALT_SEQ"/>
    <property type="molecule type" value="Genomic_DNA"/>
</dbReference>
<dbReference type="EMBL" id="AK099544">
    <property type="status" value="NOT_ANNOTATED_CDS"/>
    <property type="molecule type" value="mRNA"/>
</dbReference>
<dbReference type="RefSeq" id="XP_015640952.1">
    <property type="nucleotide sequence ID" value="XM_015785466.1"/>
</dbReference>
<dbReference type="SMR" id="A0A0P0V4R0"/>
<dbReference type="FunCoup" id="A0A0P0V4R0">
    <property type="interactions" value="914"/>
</dbReference>
<dbReference type="STRING" id="39947.A0A0P0V4R0"/>
<dbReference type="PaxDb" id="39947-A0A0P0V4R0"/>
<dbReference type="EnsemblPlants" id="Os01t0592900-02">
    <property type="protein sequence ID" value="Os01t0592900-02"/>
    <property type="gene ID" value="Os01g0592900"/>
</dbReference>
<dbReference type="Gramene" id="Os01t0592900-02">
    <property type="protein sequence ID" value="Os01t0592900-02"/>
    <property type="gene ID" value="Os01g0592900"/>
</dbReference>
<dbReference type="KEGG" id="dosa:Os01g0592900"/>
<dbReference type="eggNOG" id="KOG1132">
    <property type="taxonomic scope" value="Eukaryota"/>
</dbReference>
<dbReference type="InParanoid" id="A0A0P0V4R0"/>
<dbReference type="OMA" id="NCATIVA"/>
<dbReference type="OrthoDB" id="19182at2759"/>
<dbReference type="Proteomes" id="UP000000763">
    <property type="component" value="Chromosome 1"/>
</dbReference>
<dbReference type="Proteomes" id="UP000007752">
    <property type="component" value="Chromosome 1"/>
</dbReference>
<dbReference type="Proteomes" id="UP000059680">
    <property type="component" value="Chromosome 1"/>
</dbReference>
<dbReference type="ExpressionAtlas" id="A0A0P0V4R0">
    <property type="expression patterns" value="baseline and differential"/>
</dbReference>
<dbReference type="GO" id="GO:0005634">
    <property type="term" value="C:nucleus"/>
    <property type="evidence" value="ECO:0000318"/>
    <property type="project" value="GO_Central"/>
</dbReference>
<dbReference type="GO" id="GO:0051539">
    <property type="term" value="F:4 iron, 4 sulfur cluster binding"/>
    <property type="evidence" value="ECO:0007669"/>
    <property type="project" value="UniProtKB-KW"/>
</dbReference>
<dbReference type="GO" id="GO:0005524">
    <property type="term" value="F:ATP binding"/>
    <property type="evidence" value="ECO:0000318"/>
    <property type="project" value="GO_Central"/>
</dbReference>
<dbReference type="GO" id="GO:0016887">
    <property type="term" value="F:ATP hydrolysis activity"/>
    <property type="evidence" value="ECO:0007669"/>
    <property type="project" value="RHEA"/>
</dbReference>
<dbReference type="GO" id="GO:0003677">
    <property type="term" value="F:DNA binding"/>
    <property type="evidence" value="ECO:0007669"/>
    <property type="project" value="UniProtKB-KW"/>
</dbReference>
<dbReference type="GO" id="GO:0003678">
    <property type="term" value="F:DNA helicase activity"/>
    <property type="evidence" value="ECO:0000318"/>
    <property type="project" value="GO_Central"/>
</dbReference>
<dbReference type="GO" id="GO:0070182">
    <property type="term" value="F:DNA polymerase binding"/>
    <property type="evidence" value="ECO:0000318"/>
    <property type="project" value="GO_Central"/>
</dbReference>
<dbReference type="GO" id="GO:0046872">
    <property type="term" value="F:metal ion binding"/>
    <property type="evidence" value="ECO:0007669"/>
    <property type="project" value="UniProtKB-KW"/>
</dbReference>
<dbReference type="GO" id="GO:0036297">
    <property type="term" value="P:interstrand cross-link repair"/>
    <property type="evidence" value="ECO:0007669"/>
    <property type="project" value="EnsemblPlants"/>
</dbReference>
<dbReference type="GO" id="GO:0043007">
    <property type="term" value="P:maintenance of rDNA"/>
    <property type="evidence" value="ECO:0007669"/>
    <property type="project" value="EnsemblPlants"/>
</dbReference>
<dbReference type="GO" id="GO:0070716">
    <property type="term" value="P:mismatch repair involved in maintenance of fidelity involved in DNA-dependent DNA replication"/>
    <property type="evidence" value="ECO:0007669"/>
    <property type="project" value="EnsemblPlants"/>
</dbReference>
<dbReference type="GO" id="GO:0045910">
    <property type="term" value="P:negative regulation of DNA recombination"/>
    <property type="evidence" value="ECO:0000318"/>
    <property type="project" value="GO_Central"/>
</dbReference>
<dbReference type="GO" id="GO:1904430">
    <property type="term" value="P:negative regulation of t-circle formation"/>
    <property type="evidence" value="ECO:0000318"/>
    <property type="project" value="GO_Central"/>
</dbReference>
<dbReference type="GO" id="GO:0009555">
    <property type="term" value="P:pollen development"/>
    <property type="evidence" value="ECO:0007669"/>
    <property type="project" value="EnsemblPlants"/>
</dbReference>
<dbReference type="GO" id="GO:0000725">
    <property type="term" value="P:recombinational repair"/>
    <property type="evidence" value="ECO:0007669"/>
    <property type="project" value="EnsemblPlants"/>
</dbReference>
<dbReference type="GO" id="GO:0010569">
    <property type="term" value="P:regulation of double-strand break repair via homologous recombination"/>
    <property type="evidence" value="ECO:0000318"/>
    <property type="project" value="GO_Central"/>
</dbReference>
<dbReference type="GO" id="GO:0048364">
    <property type="term" value="P:root development"/>
    <property type="evidence" value="ECO:0007669"/>
    <property type="project" value="EnsemblPlants"/>
</dbReference>
<dbReference type="GO" id="GO:0090657">
    <property type="term" value="P:telomeric loop disassembly"/>
    <property type="evidence" value="ECO:0000318"/>
    <property type="project" value="GO_Central"/>
</dbReference>
<dbReference type="CDD" id="cd17970">
    <property type="entry name" value="DEAHc_FancJ"/>
    <property type="match status" value="1"/>
</dbReference>
<dbReference type="CDD" id="cd13932">
    <property type="entry name" value="HN_RTEL1"/>
    <property type="match status" value="1"/>
</dbReference>
<dbReference type="CDD" id="cd18788">
    <property type="entry name" value="SF2_C_XPD"/>
    <property type="match status" value="1"/>
</dbReference>
<dbReference type="FunFam" id="3.40.50.300:FF:000431">
    <property type="entry name" value="Regulator of telomere elongation helicase 1"/>
    <property type="match status" value="1"/>
</dbReference>
<dbReference type="FunFam" id="1.20.1160.20:FF:000010">
    <property type="entry name" value="Regulator of telomere elongation helicase 1 homolog"/>
    <property type="match status" value="1"/>
</dbReference>
<dbReference type="Gene3D" id="1.20.1160.20">
    <property type="match status" value="1"/>
</dbReference>
<dbReference type="Gene3D" id="3.40.50.300">
    <property type="entry name" value="P-loop containing nucleotide triphosphate hydrolases"/>
    <property type="match status" value="2"/>
</dbReference>
<dbReference type="InterPro" id="IPR006555">
    <property type="entry name" value="ATP-dep_Helicase_C"/>
</dbReference>
<dbReference type="InterPro" id="IPR045028">
    <property type="entry name" value="DinG/Rad3-like"/>
</dbReference>
<dbReference type="InterPro" id="IPR014013">
    <property type="entry name" value="Helic_SF1/SF2_ATP-bd_DinG/Rad3"/>
</dbReference>
<dbReference type="InterPro" id="IPR006554">
    <property type="entry name" value="Helicase-like_DEXD_c2"/>
</dbReference>
<dbReference type="InterPro" id="IPR014001">
    <property type="entry name" value="Helicase_ATP-bd"/>
</dbReference>
<dbReference type="InterPro" id="IPR049909">
    <property type="entry name" value="HHD_RTEL1"/>
</dbReference>
<dbReference type="InterPro" id="IPR027417">
    <property type="entry name" value="P-loop_NTPase"/>
</dbReference>
<dbReference type="InterPro" id="IPR010614">
    <property type="entry name" value="RAD3-like_helicase_DEAD"/>
</dbReference>
<dbReference type="InterPro" id="IPR013020">
    <property type="entry name" value="Rad3/Chl1-like"/>
</dbReference>
<dbReference type="NCBIfam" id="TIGR00604">
    <property type="entry name" value="rad3"/>
    <property type="match status" value="1"/>
</dbReference>
<dbReference type="PANTHER" id="PTHR11472">
    <property type="entry name" value="DNA REPAIR DEAD HELICASE RAD3/XP-D SUBFAMILY MEMBER"/>
    <property type="match status" value="1"/>
</dbReference>
<dbReference type="PANTHER" id="PTHR11472:SF34">
    <property type="entry name" value="REGULATOR OF TELOMERE ELONGATION HELICASE 1"/>
    <property type="match status" value="1"/>
</dbReference>
<dbReference type="Pfam" id="PF23109">
    <property type="entry name" value="ARCH_RTEL1"/>
    <property type="match status" value="1"/>
</dbReference>
<dbReference type="Pfam" id="PF06733">
    <property type="entry name" value="DEAD_2"/>
    <property type="match status" value="1"/>
</dbReference>
<dbReference type="Pfam" id="PF13307">
    <property type="entry name" value="Helicase_C_2"/>
    <property type="match status" value="1"/>
</dbReference>
<dbReference type="SMART" id="SM00487">
    <property type="entry name" value="DEXDc"/>
    <property type="match status" value="1"/>
</dbReference>
<dbReference type="SMART" id="SM00488">
    <property type="entry name" value="DEXDc2"/>
    <property type="match status" value="1"/>
</dbReference>
<dbReference type="SMART" id="SM00491">
    <property type="entry name" value="HELICc2"/>
    <property type="match status" value="1"/>
</dbReference>
<dbReference type="SUPFAM" id="SSF52540">
    <property type="entry name" value="P-loop containing nucleoside triphosphate hydrolases"/>
    <property type="match status" value="1"/>
</dbReference>
<dbReference type="PROSITE" id="PS00690">
    <property type="entry name" value="DEAH_ATP_HELICASE"/>
    <property type="match status" value="1"/>
</dbReference>
<dbReference type="PROSITE" id="PS51193">
    <property type="entry name" value="HELICASE_ATP_BIND_2"/>
    <property type="match status" value="1"/>
</dbReference>
<organism>
    <name type="scientific">Oryza sativa subsp. japonica</name>
    <name type="common">Rice</name>
    <dbReference type="NCBI Taxonomy" id="39947"/>
    <lineage>
        <taxon>Eukaryota</taxon>
        <taxon>Viridiplantae</taxon>
        <taxon>Streptophyta</taxon>
        <taxon>Embryophyta</taxon>
        <taxon>Tracheophyta</taxon>
        <taxon>Spermatophyta</taxon>
        <taxon>Magnoliopsida</taxon>
        <taxon>Liliopsida</taxon>
        <taxon>Poales</taxon>
        <taxon>Poaceae</taxon>
        <taxon>BOP clade</taxon>
        <taxon>Oryzoideae</taxon>
        <taxon>Oryzeae</taxon>
        <taxon>Oryzinae</taxon>
        <taxon>Oryza</taxon>
        <taxon>Oryza sativa</taxon>
    </lineage>
</organism>
<keyword id="KW-0004">4Fe-4S</keyword>
<keyword id="KW-0067">ATP-binding</keyword>
<keyword id="KW-0227">DNA damage</keyword>
<keyword id="KW-0234">DNA repair</keyword>
<keyword id="KW-0235">DNA replication</keyword>
<keyword id="KW-0238">DNA-binding</keyword>
<keyword id="KW-0347">Helicase</keyword>
<keyword id="KW-0378">Hydrolase</keyword>
<keyword id="KW-0408">Iron</keyword>
<keyword id="KW-0411">Iron-sulfur</keyword>
<keyword id="KW-0413">Isomerase</keyword>
<keyword id="KW-0479">Metal-binding</keyword>
<keyword id="KW-0547">Nucleotide-binding</keyword>
<keyword id="KW-0539">Nucleus</keyword>
<keyword id="KW-1185">Reference proteome</keyword>
<protein>
    <recommendedName>
        <fullName evidence="3">Regulator of telomere elongation helicase 1 homolog</fullName>
        <ecNumber evidence="3">5.6.2.-</ecNumber>
    </recommendedName>
</protein>
<proteinExistence type="evidence at transcript level"/>
<accession>A0A0P0V4R0</accession>
<accession>B9EXU8</accession>
<accession>Q0JLK8</accession>
<accession>Q5ZD38</accession>
<evidence type="ECO:0000255" key="1">
    <source>
        <dbReference type="PROSITE-ProRule" id="PRU00541"/>
    </source>
</evidence>
<evidence type="ECO:0000256" key="2">
    <source>
        <dbReference type="SAM" id="MobiDB-lite"/>
    </source>
</evidence>
<evidence type="ECO:0000305" key="3"/>
<evidence type="ECO:0000312" key="4">
    <source>
        <dbReference type="EMBL" id="BAD52706.1"/>
    </source>
</evidence>
<evidence type="ECO:0000312" key="5">
    <source>
        <dbReference type="EMBL" id="BAS72959.1"/>
    </source>
</evidence>
<comment type="function">
    <text evidence="3">A probable ATP-dependent DNA helicase implicated in DNA replication, DNA repair and the maintenance of genomic stability. Acts as an anti-recombinase to counteract toxic recombination and limit crossover during meiosis. Regulates meiotic recombination and crossover homeostasis by physically dissociating strand invasion events and thereby promotes noncrossover repair by meiotic synthesis dependent strand annealing (SDSA) as well as disassembly of D loop recombination intermediates.</text>
</comment>
<comment type="catalytic activity">
    <reaction evidence="3">
        <text>ATP + H2O = ADP + phosphate + H(+)</text>
        <dbReference type="Rhea" id="RHEA:13065"/>
        <dbReference type="ChEBI" id="CHEBI:15377"/>
        <dbReference type="ChEBI" id="CHEBI:15378"/>
        <dbReference type="ChEBI" id="CHEBI:30616"/>
        <dbReference type="ChEBI" id="CHEBI:43474"/>
        <dbReference type="ChEBI" id="CHEBI:456216"/>
    </reaction>
</comment>
<comment type="subcellular location">
    <subcellularLocation>
        <location evidence="3">Nucleus</location>
    </subcellularLocation>
</comment>
<comment type="similarity">
    <text evidence="3">Belongs to the helicase family. RAD3/XPD subfamily.</text>
</comment>
<comment type="sequence caution" evidence="3">
    <conflict type="erroneous termination">
        <sequence resource="EMBL" id="AK099544"/>
    </conflict>
    <text>Truncated C-terminus.</text>
</comment>
<comment type="sequence caution" evidence="3">
    <conflict type="frameshift">
        <sequence resource="EMBL" id="AK099544"/>
    </conflict>
</comment>
<comment type="sequence caution" evidence="3">
    <conflict type="erroneous gene model prediction">
        <sequence resource="EMBL-CDS" id="BAD52706"/>
    </conflict>
</comment>
<comment type="sequence caution" evidence="3">
    <conflict type="erroneous gene model prediction">
        <sequence resource="EMBL-CDS" id="BAF05370"/>
    </conflict>
</comment>
<comment type="sequence caution" evidence="3">
    <conflict type="erroneous gene model prediction">
        <sequence resource="EMBL-CDS" id="EEE54911"/>
    </conflict>
</comment>
<reference key="1">
    <citation type="journal article" date="2005" name="Nature">
        <title>The map-based sequence of the rice genome.</title>
        <authorList>
            <consortium name="International rice genome sequencing project (IRGSP)"/>
        </authorList>
    </citation>
    <scope>NUCLEOTIDE SEQUENCE [LARGE SCALE GENOMIC DNA]</scope>
    <source>
        <strain>cv. Nipponbare</strain>
    </source>
</reference>
<reference key="2">
    <citation type="journal article" date="2008" name="Nucleic Acids Res.">
        <title>The rice annotation project database (RAP-DB): 2008 update.</title>
        <authorList>
            <consortium name="The rice annotation project (RAP)"/>
        </authorList>
    </citation>
    <scope>GENOME REANNOTATION</scope>
    <source>
        <strain>cv. Nipponbare</strain>
    </source>
</reference>
<reference key="3">
    <citation type="journal article" date="2013" name="Rice">
        <title>Improvement of the Oryza sativa Nipponbare reference genome using next generation sequence and optical map data.</title>
        <authorList>
            <person name="Kawahara Y."/>
            <person name="de la Bastide M."/>
            <person name="Hamilton J.P."/>
            <person name="Kanamori H."/>
            <person name="McCombie W.R."/>
            <person name="Ouyang S."/>
            <person name="Schwartz D.C."/>
            <person name="Tanaka T."/>
            <person name="Wu J."/>
            <person name="Zhou S."/>
            <person name="Childs K.L."/>
            <person name="Davidson R.M."/>
            <person name="Lin H."/>
            <person name="Quesada-Ocampo L."/>
            <person name="Vaillancourt B."/>
            <person name="Sakai H."/>
            <person name="Lee S.S."/>
            <person name="Kim J."/>
            <person name="Numa H."/>
            <person name="Itoh T."/>
            <person name="Buell C.R."/>
            <person name="Matsumoto T."/>
        </authorList>
    </citation>
    <scope>GENOME REANNOTATION</scope>
    <source>
        <strain>cv. Nipponbare</strain>
    </source>
</reference>
<reference key="4">
    <citation type="journal article" date="2005" name="PLoS Biol.">
        <title>The genomes of Oryza sativa: a history of duplications.</title>
        <authorList>
            <person name="Yu J."/>
            <person name="Wang J."/>
            <person name="Lin W."/>
            <person name="Li S."/>
            <person name="Li H."/>
            <person name="Zhou J."/>
            <person name="Ni P."/>
            <person name="Dong W."/>
            <person name="Hu S."/>
            <person name="Zeng C."/>
            <person name="Zhang J."/>
            <person name="Zhang Y."/>
            <person name="Li R."/>
            <person name="Xu Z."/>
            <person name="Li S."/>
            <person name="Li X."/>
            <person name="Zheng H."/>
            <person name="Cong L."/>
            <person name="Lin L."/>
            <person name="Yin J."/>
            <person name="Geng J."/>
            <person name="Li G."/>
            <person name="Shi J."/>
            <person name="Liu J."/>
            <person name="Lv H."/>
            <person name="Li J."/>
            <person name="Wang J."/>
            <person name="Deng Y."/>
            <person name="Ran L."/>
            <person name="Shi X."/>
            <person name="Wang X."/>
            <person name="Wu Q."/>
            <person name="Li C."/>
            <person name="Ren X."/>
            <person name="Wang J."/>
            <person name="Wang X."/>
            <person name="Li D."/>
            <person name="Liu D."/>
            <person name="Zhang X."/>
            <person name="Ji Z."/>
            <person name="Zhao W."/>
            <person name="Sun Y."/>
            <person name="Zhang Z."/>
            <person name="Bao J."/>
            <person name="Han Y."/>
            <person name="Dong L."/>
            <person name="Ji J."/>
            <person name="Chen P."/>
            <person name="Wu S."/>
            <person name="Liu J."/>
            <person name="Xiao Y."/>
            <person name="Bu D."/>
            <person name="Tan J."/>
            <person name="Yang L."/>
            <person name="Ye C."/>
            <person name="Zhang J."/>
            <person name="Xu J."/>
            <person name="Zhou Y."/>
            <person name="Yu Y."/>
            <person name="Zhang B."/>
            <person name="Zhuang S."/>
            <person name="Wei H."/>
            <person name="Liu B."/>
            <person name="Lei M."/>
            <person name="Yu H."/>
            <person name="Li Y."/>
            <person name="Xu H."/>
            <person name="Wei S."/>
            <person name="He X."/>
            <person name="Fang L."/>
            <person name="Zhang Z."/>
            <person name="Zhang Y."/>
            <person name="Huang X."/>
            <person name="Su Z."/>
            <person name="Tong W."/>
            <person name="Li J."/>
            <person name="Tong Z."/>
            <person name="Li S."/>
            <person name="Ye J."/>
            <person name="Wang L."/>
            <person name="Fang L."/>
            <person name="Lei T."/>
            <person name="Chen C.-S."/>
            <person name="Chen H.-C."/>
            <person name="Xu Z."/>
            <person name="Li H."/>
            <person name="Huang H."/>
            <person name="Zhang F."/>
            <person name="Xu H."/>
            <person name="Li N."/>
            <person name="Zhao C."/>
            <person name="Li S."/>
            <person name="Dong L."/>
            <person name="Huang Y."/>
            <person name="Li L."/>
            <person name="Xi Y."/>
            <person name="Qi Q."/>
            <person name="Li W."/>
            <person name="Zhang B."/>
            <person name="Hu W."/>
            <person name="Zhang Y."/>
            <person name="Tian X."/>
            <person name="Jiao Y."/>
            <person name="Liang X."/>
            <person name="Jin J."/>
            <person name="Gao L."/>
            <person name="Zheng W."/>
            <person name="Hao B."/>
            <person name="Liu S.-M."/>
            <person name="Wang W."/>
            <person name="Yuan L."/>
            <person name="Cao M."/>
            <person name="McDermott J."/>
            <person name="Samudrala R."/>
            <person name="Wang J."/>
            <person name="Wong G.K.-S."/>
            <person name="Yang H."/>
        </authorList>
    </citation>
    <scope>NUCLEOTIDE SEQUENCE [LARGE SCALE GENOMIC DNA]</scope>
    <source>
        <strain>cv. Nipponbare</strain>
    </source>
</reference>
<reference key="5">
    <citation type="journal article" date="2003" name="Science">
        <title>Collection, mapping, and annotation of over 28,000 cDNA clones from japonica rice.</title>
        <authorList>
            <consortium name="The rice full-length cDNA consortium"/>
        </authorList>
    </citation>
    <scope>NUCLEOTIDE SEQUENCE [LARGE SCALE MRNA]</scope>
    <source>
        <strain>cv. Nipponbare</strain>
    </source>
</reference>
<reference key="6">
    <citation type="journal article" date="2011" name="J. Exp. Bot.">
        <title>The role of DNA helicases and their interaction partners in genome stability and meiotic recombination in plants.</title>
        <authorList>
            <person name="Knoll A."/>
            <person name="Puchta H."/>
        </authorList>
    </citation>
    <scope>REVIEW</scope>
    <scope>IDENTIFICATION</scope>
</reference>
<sequence>MPVYRIRGVDVDFPYDAYDCQITYMDRVLESLQQGKNALLESPTGTGKTLCLLCSALAWRRTFGEFLRGGGGGGGGGGGGGGGGSQQPPYGSQPSGSQHSGGSASQSSRYPVIIYASRTHSQLRQVIKELKATSYRPKMAVLGSREQMCIHEEVSKLRGRQQNNACHYLCKKRWCRHHNSVAEFMRNNSELGSEACDIEDLVNIGRTKGPCPYYISRELSKSVDILFAPYNYLIDPGNRRSLNGIPWDNAVLIFDEAHNLESICADAASFDLLPNNLSSCIAEAQECIQLCSAKRTFENSADKQFDPENYAILKALLMALEKKISEVVIDSKELGHTKPGNYIYEFLSELNITSETSKKLIDTIDGASLLLEEGNSAETGPGMKAKATVCRLETIRDILDIIFRGGGQSHAKYYRFHVNECQQNSGDALKVLGKVSRTLSWWCFNPGLAMEEFLKLGVRSIILTSGTLSPLDSLALELNLEFPVRLENPHVIASDQIWVGVVPVGPSGHPLNSSYRTRETLKYKQELGITIVNFARIVPDGLLVFFPSYSMMDKCINCWKDRNHENSSDEHTIWQRICKHKQPVIEPRQSSNFPNAIEDYAAKLRDSSTTGAIFFAVCRGKVSEGLDFADRAGRAVIVTGMPFATPTDPKVRLKRDYLDKLGSASNKNSKALTGEEWYVQQAARAVNQAVGRVIRHRHDYGAIIYCDERFVWQNYQSQMSYWLRPYIKCYKKYGEVVQGLTRFFRDKVSIDSSKPNETDFNDNIVLLADKHKPQETISALAVTTANENQRTALSVNPTTKRSNYIKFAQITPANRSTLSMKHGCSSTSQLLYSGDKLSTDAQVIDLAADVATSHLAGYRFKSLGPKKAKVMVGSKDVCFDDGSPKLQHNVESRALAGCLGEQSTASSKKSNITHAPGNSGAIHEKSGGQESNAGPAFLKLAREKLSTAEYRDFVEYMKALKLKTMHIKDSLDAIAKLFSSPERLPLLEGFRVFVPKNHLSLYEQLVQSYTVPNT</sequence>